<accession>B9DW16</accession>
<organism>
    <name type="scientific">Streptococcus uberis (strain ATCC BAA-854 / 0140J)</name>
    <dbReference type="NCBI Taxonomy" id="218495"/>
    <lineage>
        <taxon>Bacteria</taxon>
        <taxon>Bacillati</taxon>
        <taxon>Bacillota</taxon>
        <taxon>Bacilli</taxon>
        <taxon>Lactobacillales</taxon>
        <taxon>Streptococcaceae</taxon>
        <taxon>Streptococcus</taxon>
    </lineage>
</organism>
<name>SYL_STRU0</name>
<dbReference type="EC" id="6.1.1.4" evidence="1"/>
<dbReference type="EMBL" id="AM946015">
    <property type="protein sequence ID" value="CAR43674.1"/>
    <property type="molecule type" value="Genomic_DNA"/>
</dbReference>
<dbReference type="RefSeq" id="WP_015912021.1">
    <property type="nucleotide sequence ID" value="NC_012004.1"/>
</dbReference>
<dbReference type="SMR" id="B9DW16"/>
<dbReference type="STRING" id="218495.SUB1729"/>
<dbReference type="KEGG" id="sub:SUB1729"/>
<dbReference type="eggNOG" id="COG0495">
    <property type="taxonomic scope" value="Bacteria"/>
</dbReference>
<dbReference type="HOGENOM" id="CLU_004427_0_0_9"/>
<dbReference type="OrthoDB" id="9810365at2"/>
<dbReference type="Proteomes" id="UP000000449">
    <property type="component" value="Chromosome"/>
</dbReference>
<dbReference type="GO" id="GO:0005829">
    <property type="term" value="C:cytosol"/>
    <property type="evidence" value="ECO:0007669"/>
    <property type="project" value="TreeGrafter"/>
</dbReference>
<dbReference type="GO" id="GO:0002161">
    <property type="term" value="F:aminoacyl-tRNA deacylase activity"/>
    <property type="evidence" value="ECO:0007669"/>
    <property type="project" value="InterPro"/>
</dbReference>
<dbReference type="GO" id="GO:0005524">
    <property type="term" value="F:ATP binding"/>
    <property type="evidence" value="ECO:0007669"/>
    <property type="project" value="UniProtKB-UniRule"/>
</dbReference>
<dbReference type="GO" id="GO:0004823">
    <property type="term" value="F:leucine-tRNA ligase activity"/>
    <property type="evidence" value="ECO:0007669"/>
    <property type="project" value="UniProtKB-UniRule"/>
</dbReference>
<dbReference type="GO" id="GO:0006429">
    <property type="term" value="P:leucyl-tRNA aminoacylation"/>
    <property type="evidence" value="ECO:0007669"/>
    <property type="project" value="UniProtKB-UniRule"/>
</dbReference>
<dbReference type="CDD" id="cd07958">
    <property type="entry name" value="Anticodon_Ia_Leu_BEm"/>
    <property type="match status" value="1"/>
</dbReference>
<dbReference type="CDD" id="cd00812">
    <property type="entry name" value="LeuRS_core"/>
    <property type="match status" value="1"/>
</dbReference>
<dbReference type="FunFam" id="1.10.730.10:FF:000012">
    <property type="entry name" value="Leucine--tRNA ligase"/>
    <property type="match status" value="1"/>
</dbReference>
<dbReference type="FunFam" id="3.40.50.620:FF:000056">
    <property type="entry name" value="Leucine--tRNA ligase"/>
    <property type="match status" value="1"/>
</dbReference>
<dbReference type="FunFam" id="3.40.50.620:FF:000077">
    <property type="entry name" value="Leucine--tRNA ligase"/>
    <property type="match status" value="1"/>
</dbReference>
<dbReference type="FunFam" id="1.10.730.10:FF:000011">
    <property type="entry name" value="Leucine--tRNA ligase chloroplastic/mitochondrial"/>
    <property type="match status" value="1"/>
</dbReference>
<dbReference type="Gene3D" id="3.40.50.620">
    <property type="entry name" value="HUPs"/>
    <property type="match status" value="2"/>
</dbReference>
<dbReference type="Gene3D" id="1.10.730.10">
    <property type="entry name" value="Isoleucyl-tRNA Synthetase, Domain 1"/>
    <property type="match status" value="1"/>
</dbReference>
<dbReference type="Gene3D" id="3.90.740.10">
    <property type="entry name" value="Valyl/Leucyl/Isoleucyl-tRNA synthetase, editing domain"/>
    <property type="match status" value="1"/>
</dbReference>
<dbReference type="HAMAP" id="MF_00049_B">
    <property type="entry name" value="Leu_tRNA_synth_B"/>
    <property type="match status" value="1"/>
</dbReference>
<dbReference type="InterPro" id="IPR001412">
    <property type="entry name" value="aa-tRNA-synth_I_CS"/>
</dbReference>
<dbReference type="InterPro" id="IPR002300">
    <property type="entry name" value="aa-tRNA-synth_Ia"/>
</dbReference>
<dbReference type="InterPro" id="IPR002302">
    <property type="entry name" value="Leu-tRNA-ligase"/>
</dbReference>
<dbReference type="InterPro" id="IPR025709">
    <property type="entry name" value="Leu_tRNA-synth_edit"/>
</dbReference>
<dbReference type="InterPro" id="IPR013155">
    <property type="entry name" value="M/V/L/I-tRNA-synth_anticd-bd"/>
</dbReference>
<dbReference type="InterPro" id="IPR015413">
    <property type="entry name" value="Methionyl/Leucyl_tRNA_Synth"/>
</dbReference>
<dbReference type="InterPro" id="IPR014729">
    <property type="entry name" value="Rossmann-like_a/b/a_fold"/>
</dbReference>
<dbReference type="InterPro" id="IPR009080">
    <property type="entry name" value="tRNAsynth_Ia_anticodon-bd"/>
</dbReference>
<dbReference type="InterPro" id="IPR009008">
    <property type="entry name" value="Val/Leu/Ile-tRNA-synth_edit"/>
</dbReference>
<dbReference type="NCBIfam" id="TIGR00396">
    <property type="entry name" value="leuS_bact"/>
    <property type="match status" value="1"/>
</dbReference>
<dbReference type="PANTHER" id="PTHR43740:SF2">
    <property type="entry name" value="LEUCINE--TRNA LIGASE, MITOCHONDRIAL"/>
    <property type="match status" value="1"/>
</dbReference>
<dbReference type="PANTHER" id="PTHR43740">
    <property type="entry name" value="LEUCYL-TRNA SYNTHETASE"/>
    <property type="match status" value="1"/>
</dbReference>
<dbReference type="Pfam" id="PF08264">
    <property type="entry name" value="Anticodon_1"/>
    <property type="match status" value="1"/>
</dbReference>
<dbReference type="Pfam" id="PF00133">
    <property type="entry name" value="tRNA-synt_1"/>
    <property type="match status" value="2"/>
</dbReference>
<dbReference type="Pfam" id="PF13603">
    <property type="entry name" value="tRNA-synt_1_2"/>
    <property type="match status" value="1"/>
</dbReference>
<dbReference type="Pfam" id="PF09334">
    <property type="entry name" value="tRNA-synt_1g"/>
    <property type="match status" value="1"/>
</dbReference>
<dbReference type="PRINTS" id="PR00985">
    <property type="entry name" value="TRNASYNTHLEU"/>
</dbReference>
<dbReference type="SUPFAM" id="SSF47323">
    <property type="entry name" value="Anticodon-binding domain of a subclass of class I aminoacyl-tRNA synthetases"/>
    <property type="match status" value="1"/>
</dbReference>
<dbReference type="SUPFAM" id="SSF52374">
    <property type="entry name" value="Nucleotidylyl transferase"/>
    <property type="match status" value="1"/>
</dbReference>
<dbReference type="SUPFAM" id="SSF50677">
    <property type="entry name" value="ValRS/IleRS/LeuRS editing domain"/>
    <property type="match status" value="1"/>
</dbReference>
<dbReference type="PROSITE" id="PS00178">
    <property type="entry name" value="AA_TRNA_LIGASE_I"/>
    <property type="match status" value="1"/>
</dbReference>
<sequence>MTFYNHKEIEPKWQDFWAKNHTFKTGTDSSKPKFYALDMFPYPSGAGLHVGHPEGYTATDILSRFKRAQGYNVLHPMGWDAFGLPAEQYAMDTGNDPADFTAENIANFKRQINSLGFSYDWDREVNTTDPNYYKWTQWIFTKLYEKGLAYEAEVPVNWVEELGTAIANEEVLPDGTSERGGYPVVRKPMRQWMLKITAYAERLLEDLEEVDWPESIKDMQRNWIGKSVGANITFNVKDSEESFTVFTTRPDTLFGATYAVLAPEHALVDAITTEEQAEAIAEYKRQASLKSDLARTDLAKEKTGVWTGAYAINPVNGKEMPIWIADYVLSSYGTGAIMAVPAHDERDWEFAKQFHLDIIPVLEGGNVQEAAYTEDGLHINSDFLDGLNKEEAIAKTVAWLEEKEVGNEKVSYRLRDWLFSRQRYWGEPIPIIHWEDGTSTAVPEDQLPLILPVTKDIHPSGTGESPLANITDWLEVTREDGVKGRRETNTMPQWAGSSWYYLRYIDPKNDKAIADPDLLKQWLPVDIYVGGAEHAVLHLLYARFWHKVLYDLGVVPTKEPFQKLFNQGMILGTSYRDHRGALVATDKVEKREGSYFHIETGEELEQAPAKMSKSLKNVVNPDDVVEQYGADTLRVYEMFMGPLDASIAWSEEGLEGSRKFLDRVYRLITTKEMTGDNSGALDKVYHETVKAVTEQIESMKFNTAIAQLMIFVNAANKEDKLYKEQAKGFVQLIAPFAPHLGEELWQVLTDSNQSISHVAWPTWDENKLVENDVEIVVQIKGKVKAKLVLAKDLSKEELEAAALSHEKIQAEIAGKEIVKVIAVPNKLVNIVVK</sequence>
<comment type="catalytic activity">
    <reaction evidence="1">
        <text>tRNA(Leu) + L-leucine + ATP = L-leucyl-tRNA(Leu) + AMP + diphosphate</text>
        <dbReference type="Rhea" id="RHEA:11688"/>
        <dbReference type="Rhea" id="RHEA-COMP:9613"/>
        <dbReference type="Rhea" id="RHEA-COMP:9622"/>
        <dbReference type="ChEBI" id="CHEBI:30616"/>
        <dbReference type="ChEBI" id="CHEBI:33019"/>
        <dbReference type="ChEBI" id="CHEBI:57427"/>
        <dbReference type="ChEBI" id="CHEBI:78442"/>
        <dbReference type="ChEBI" id="CHEBI:78494"/>
        <dbReference type="ChEBI" id="CHEBI:456215"/>
        <dbReference type="EC" id="6.1.1.4"/>
    </reaction>
</comment>
<comment type="subcellular location">
    <subcellularLocation>
        <location evidence="1">Cytoplasm</location>
    </subcellularLocation>
</comment>
<comment type="similarity">
    <text evidence="1">Belongs to the class-I aminoacyl-tRNA synthetase family.</text>
</comment>
<feature type="chain" id="PRO_1000199230" description="Leucine--tRNA ligase">
    <location>
        <begin position="1"/>
        <end position="833"/>
    </location>
</feature>
<feature type="short sequence motif" description="'HIGH' region">
    <location>
        <begin position="41"/>
        <end position="52"/>
    </location>
</feature>
<feature type="short sequence motif" description="'KMSKS' region">
    <location>
        <begin position="610"/>
        <end position="614"/>
    </location>
</feature>
<feature type="binding site" evidence="1">
    <location>
        <position position="613"/>
    </location>
    <ligand>
        <name>ATP</name>
        <dbReference type="ChEBI" id="CHEBI:30616"/>
    </ligand>
</feature>
<keyword id="KW-0030">Aminoacyl-tRNA synthetase</keyword>
<keyword id="KW-0067">ATP-binding</keyword>
<keyword id="KW-0963">Cytoplasm</keyword>
<keyword id="KW-0436">Ligase</keyword>
<keyword id="KW-0547">Nucleotide-binding</keyword>
<keyword id="KW-0648">Protein biosynthesis</keyword>
<keyword id="KW-1185">Reference proteome</keyword>
<protein>
    <recommendedName>
        <fullName evidence="1">Leucine--tRNA ligase</fullName>
        <ecNumber evidence="1">6.1.1.4</ecNumber>
    </recommendedName>
    <alternativeName>
        <fullName evidence="1">Leucyl-tRNA synthetase</fullName>
        <shortName evidence="1">LeuRS</shortName>
    </alternativeName>
</protein>
<evidence type="ECO:0000255" key="1">
    <source>
        <dbReference type="HAMAP-Rule" id="MF_00049"/>
    </source>
</evidence>
<reference key="1">
    <citation type="journal article" date="2009" name="BMC Genomics">
        <title>Evidence for niche adaptation in the genome of the bovine pathogen Streptococcus uberis.</title>
        <authorList>
            <person name="Ward P.N."/>
            <person name="Holden M.T.G."/>
            <person name="Leigh J.A."/>
            <person name="Lennard N."/>
            <person name="Bignell A."/>
            <person name="Barron A."/>
            <person name="Clark L."/>
            <person name="Quail M.A."/>
            <person name="Woodward J."/>
            <person name="Barrell B.G."/>
            <person name="Egan S.A."/>
            <person name="Field T.R."/>
            <person name="Maskell D."/>
            <person name="Kehoe M."/>
            <person name="Dowson C.G."/>
            <person name="Chanter N."/>
            <person name="Whatmore A.M."/>
            <person name="Bentley S.D."/>
            <person name="Parkhill J."/>
        </authorList>
    </citation>
    <scope>NUCLEOTIDE SEQUENCE [LARGE SCALE GENOMIC DNA]</scope>
    <source>
        <strain>ATCC BAA-854 / 0140J</strain>
    </source>
</reference>
<proteinExistence type="inferred from homology"/>
<gene>
    <name evidence="1" type="primary">leuS</name>
    <name type="ordered locus">SUB1729</name>
</gene>